<keyword id="KW-0002">3D-structure</keyword>
<keyword id="KW-0067">ATP-binding</keyword>
<keyword id="KW-0347">Helicase</keyword>
<keyword id="KW-0378">Hydrolase</keyword>
<keyword id="KW-0507">mRNA processing</keyword>
<keyword id="KW-0508">mRNA splicing</keyword>
<keyword id="KW-0547">Nucleotide-binding</keyword>
<keyword id="KW-0539">Nucleus</keyword>
<keyword id="KW-1185">Reference proteome</keyword>
<reference key="1">
    <citation type="journal article" date="1998" name="Science">
        <title>Genome sequence of the nematode C. elegans: a platform for investigating biology.</title>
        <authorList>
            <consortium name="The C. elegans sequencing consortium"/>
        </authorList>
    </citation>
    <scope>NUCLEOTIDE SEQUENCE [LARGE SCALE GENOMIC DNA]</scope>
    <source>
        <strain>Bristol N2</strain>
    </source>
</reference>
<protein>
    <recommendedName>
        <fullName evidence="2">Pre-mRNA-splicing factor ATP-dependent RNA helicase ddx-15</fullName>
        <ecNumber evidence="2">3.6.4.13</ecNumber>
    </recommendedName>
    <alternativeName>
        <fullName evidence="2">DEAH box protein 15</fullName>
    </alternativeName>
</protein>
<feature type="chain" id="PRO_0000055142" description="Pre-mRNA-splicing factor ATP-dependent RNA helicase ddx-15" evidence="6">
    <location>
        <begin position="1"/>
        <end position="739"/>
    </location>
</feature>
<feature type="domain" description="Helicase ATP-binding" evidence="3">
    <location>
        <begin position="86"/>
        <end position="257"/>
    </location>
</feature>
<feature type="domain" description="Helicase C-terminal" evidence="4">
    <location>
        <begin position="282"/>
        <end position="462"/>
    </location>
</feature>
<feature type="region of interest" description="Disordered" evidence="5">
    <location>
        <begin position="1"/>
        <end position="49"/>
    </location>
</feature>
<feature type="short sequence motif" description="DEAH box">
    <location>
        <begin position="204"/>
        <end position="207"/>
    </location>
</feature>
<feature type="compositionally biased region" description="Basic and acidic residues" evidence="5">
    <location>
        <begin position="1"/>
        <end position="19"/>
    </location>
</feature>
<feature type="compositionally biased region" description="Basic residues" evidence="5">
    <location>
        <begin position="20"/>
        <end position="35"/>
    </location>
</feature>
<feature type="binding site" evidence="3">
    <location>
        <begin position="99"/>
        <end position="106"/>
    </location>
    <ligand>
        <name>ATP</name>
        <dbReference type="ChEBI" id="CHEBI:30616"/>
    </ligand>
</feature>
<name>DHX15_CAEEL</name>
<evidence type="ECO:0000250" key="1">
    <source>
        <dbReference type="UniProtKB" id="O35286"/>
    </source>
</evidence>
<evidence type="ECO:0000250" key="2">
    <source>
        <dbReference type="UniProtKB" id="O43143"/>
    </source>
</evidence>
<evidence type="ECO:0000255" key="3">
    <source>
        <dbReference type="PROSITE-ProRule" id="PRU00541"/>
    </source>
</evidence>
<evidence type="ECO:0000255" key="4">
    <source>
        <dbReference type="PROSITE-ProRule" id="PRU00542"/>
    </source>
</evidence>
<evidence type="ECO:0000256" key="5">
    <source>
        <dbReference type="SAM" id="MobiDB-lite"/>
    </source>
</evidence>
<evidence type="ECO:0000305" key="6"/>
<evidence type="ECO:0000312" key="7">
    <source>
        <dbReference type="WormBase" id="F56D2.6a"/>
    </source>
</evidence>
<comment type="function">
    <text evidence="2">Pre-mRNA processing factor involved in disassembly of spliceosomes after the release of mature mRNA.</text>
</comment>
<comment type="catalytic activity">
    <reaction evidence="2">
        <text>ATP + H2O = ADP + phosphate + H(+)</text>
        <dbReference type="Rhea" id="RHEA:13065"/>
        <dbReference type="ChEBI" id="CHEBI:15377"/>
        <dbReference type="ChEBI" id="CHEBI:15378"/>
        <dbReference type="ChEBI" id="CHEBI:30616"/>
        <dbReference type="ChEBI" id="CHEBI:43474"/>
        <dbReference type="ChEBI" id="CHEBI:456216"/>
        <dbReference type="EC" id="3.6.4.13"/>
    </reaction>
</comment>
<comment type="subcellular location">
    <subcellularLocation>
        <location evidence="1">Nucleus</location>
    </subcellularLocation>
</comment>
<comment type="similarity">
    <text evidence="6">Belongs to the DEAD box helicase family. DEAH subfamily. DDX15/PRP43 sub-subfamily.</text>
</comment>
<gene>
    <name evidence="7" type="primary">ddx-15</name>
    <name evidence="7" type="ORF">F56D2.6</name>
</gene>
<dbReference type="EC" id="3.6.4.13" evidence="2"/>
<dbReference type="EMBL" id="FO080358">
    <property type="protein sequence ID" value="CCD63138.1"/>
    <property type="molecule type" value="Genomic_DNA"/>
</dbReference>
<dbReference type="PIR" id="T16482">
    <property type="entry name" value="T16482"/>
</dbReference>
<dbReference type="RefSeq" id="NP_741147.1">
    <property type="nucleotide sequence ID" value="NM_171130.5"/>
</dbReference>
<dbReference type="PDB" id="8RO1">
    <property type="method" value="EM"/>
    <property type="resolution" value="3.00 A"/>
    <property type="chains" value="DX=1-739"/>
</dbReference>
<dbReference type="PDBsum" id="8RO1"/>
<dbReference type="EMDB" id="EMD-19398"/>
<dbReference type="SMR" id="Q20875"/>
<dbReference type="BioGRID" id="41000">
    <property type="interactions" value="16"/>
</dbReference>
<dbReference type="FunCoup" id="Q20875">
    <property type="interactions" value="3603"/>
</dbReference>
<dbReference type="STRING" id="6239.F56D2.6a.1"/>
<dbReference type="iPTMnet" id="Q20875"/>
<dbReference type="PaxDb" id="6239-F56D2.6a"/>
<dbReference type="PeptideAtlas" id="Q20875"/>
<dbReference type="EnsemblMetazoa" id="F56D2.6a.1">
    <property type="protein sequence ID" value="F56D2.6a.1"/>
    <property type="gene ID" value="WBGene00018967"/>
</dbReference>
<dbReference type="GeneID" id="175771"/>
<dbReference type="KEGG" id="cel:CELE_F56D2.6"/>
<dbReference type="UCSC" id="F56D2.6a">
    <property type="organism name" value="c. elegans"/>
</dbReference>
<dbReference type="AGR" id="WB:WBGene00018967"/>
<dbReference type="CTD" id="175771"/>
<dbReference type="WormBase" id="F56D2.6a">
    <property type="protein sequence ID" value="CE01334"/>
    <property type="gene ID" value="WBGene00018967"/>
    <property type="gene designation" value="ddx-15"/>
</dbReference>
<dbReference type="eggNOG" id="KOG0925">
    <property type="taxonomic scope" value="Eukaryota"/>
</dbReference>
<dbReference type="GeneTree" id="ENSGT00940000155800"/>
<dbReference type="InParanoid" id="Q20875"/>
<dbReference type="OMA" id="MKVYPLY"/>
<dbReference type="OrthoDB" id="10253254at2759"/>
<dbReference type="PhylomeDB" id="Q20875"/>
<dbReference type="Reactome" id="R-CEL-72163">
    <property type="pathway name" value="mRNA Splicing - Major Pathway"/>
</dbReference>
<dbReference type="PRO" id="PR:Q20875"/>
<dbReference type="Proteomes" id="UP000001940">
    <property type="component" value="Chromosome III"/>
</dbReference>
<dbReference type="Bgee" id="WBGene00018967">
    <property type="expression patterns" value="Expressed in embryo and 4 other cell types or tissues"/>
</dbReference>
<dbReference type="ExpressionAtlas" id="Q20875">
    <property type="expression patterns" value="baseline and differential"/>
</dbReference>
<dbReference type="GO" id="GO:0005681">
    <property type="term" value="C:spliceosomal complex"/>
    <property type="evidence" value="ECO:0000318"/>
    <property type="project" value="GO_Central"/>
</dbReference>
<dbReference type="GO" id="GO:0005524">
    <property type="term" value="F:ATP binding"/>
    <property type="evidence" value="ECO:0007669"/>
    <property type="project" value="UniProtKB-KW"/>
</dbReference>
<dbReference type="GO" id="GO:0016887">
    <property type="term" value="F:ATP hydrolysis activity"/>
    <property type="evidence" value="ECO:0007669"/>
    <property type="project" value="RHEA"/>
</dbReference>
<dbReference type="GO" id="GO:0004386">
    <property type="term" value="F:helicase activity"/>
    <property type="evidence" value="ECO:0000318"/>
    <property type="project" value="GO_Central"/>
</dbReference>
<dbReference type="GO" id="GO:0003723">
    <property type="term" value="F:RNA binding"/>
    <property type="evidence" value="ECO:0000318"/>
    <property type="project" value="GO_Central"/>
</dbReference>
<dbReference type="GO" id="GO:0003724">
    <property type="term" value="F:RNA helicase activity"/>
    <property type="evidence" value="ECO:0000250"/>
    <property type="project" value="UniProtKB"/>
</dbReference>
<dbReference type="GO" id="GO:0006397">
    <property type="term" value="P:mRNA processing"/>
    <property type="evidence" value="ECO:0007669"/>
    <property type="project" value="UniProtKB-KW"/>
</dbReference>
<dbReference type="GO" id="GO:0008380">
    <property type="term" value="P:RNA splicing"/>
    <property type="evidence" value="ECO:0007669"/>
    <property type="project" value="UniProtKB-KW"/>
</dbReference>
<dbReference type="GO" id="GO:0006364">
    <property type="term" value="P:rRNA processing"/>
    <property type="evidence" value="ECO:0000250"/>
    <property type="project" value="UniProtKB"/>
</dbReference>
<dbReference type="CDD" id="cd17973">
    <property type="entry name" value="DEXHc_DHX15"/>
    <property type="match status" value="1"/>
</dbReference>
<dbReference type="CDD" id="cd18791">
    <property type="entry name" value="SF2_C_RHA"/>
    <property type="match status" value="1"/>
</dbReference>
<dbReference type="FunFam" id="3.40.50.300:FF:000007">
    <property type="entry name" value="Pre-mRNA-splicing factor ATP-dependent RNA helicase"/>
    <property type="match status" value="1"/>
</dbReference>
<dbReference type="FunFam" id="3.40.50.300:FF:000324">
    <property type="entry name" value="pre-mRNA-splicing factor ATP-dependent RNA helicase DHX15"/>
    <property type="match status" value="1"/>
</dbReference>
<dbReference type="FunFam" id="1.20.120.1080:FF:000003">
    <property type="entry name" value="Pre-mRNA-splicing factor ATP-dependent RNA helicase PRP43"/>
    <property type="match status" value="1"/>
</dbReference>
<dbReference type="Gene3D" id="1.20.120.1080">
    <property type="match status" value="1"/>
</dbReference>
<dbReference type="Gene3D" id="3.40.50.300">
    <property type="entry name" value="P-loop containing nucleotide triphosphate hydrolases"/>
    <property type="match status" value="2"/>
</dbReference>
<dbReference type="InterPro" id="IPR011709">
    <property type="entry name" value="DEAD-box_helicase_OB_fold"/>
</dbReference>
<dbReference type="InterPro" id="IPR011545">
    <property type="entry name" value="DEAD/DEAH_box_helicase_dom"/>
</dbReference>
<dbReference type="InterPro" id="IPR044756">
    <property type="entry name" value="DHX15_DEXHc"/>
</dbReference>
<dbReference type="InterPro" id="IPR048333">
    <property type="entry name" value="HA2_WH"/>
</dbReference>
<dbReference type="InterPro" id="IPR007502">
    <property type="entry name" value="Helicase-assoc_dom"/>
</dbReference>
<dbReference type="InterPro" id="IPR014001">
    <property type="entry name" value="Helicase_ATP-bd"/>
</dbReference>
<dbReference type="InterPro" id="IPR001650">
    <property type="entry name" value="Helicase_C-like"/>
</dbReference>
<dbReference type="InterPro" id="IPR027417">
    <property type="entry name" value="P-loop_NTPase"/>
</dbReference>
<dbReference type="PANTHER" id="PTHR18934">
    <property type="entry name" value="ATP-DEPENDENT RNA HELICASE"/>
    <property type="match status" value="1"/>
</dbReference>
<dbReference type="PANTHER" id="PTHR18934:SF109">
    <property type="entry name" value="ATP-DEPENDENT RNA HELICASE DHX15 HOMOLOG"/>
    <property type="match status" value="1"/>
</dbReference>
<dbReference type="Pfam" id="PF00270">
    <property type="entry name" value="DEAD"/>
    <property type="match status" value="1"/>
</dbReference>
<dbReference type="Pfam" id="PF21010">
    <property type="entry name" value="HA2_C"/>
    <property type="match status" value="1"/>
</dbReference>
<dbReference type="Pfam" id="PF04408">
    <property type="entry name" value="HA2_N"/>
    <property type="match status" value="1"/>
</dbReference>
<dbReference type="Pfam" id="PF00271">
    <property type="entry name" value="Helicase_C"/>
    <property type="match status" value="1"/>
</dbReference>
<dbReference type="Pfam" id="PF07717">
    <property type="entry name" value="OB_NTP_bind"/>
    <property type="match status" value="1"/>
</dbReference>
<dbReference type="SMART" id="SM00487">
    <property type="entry name" value="DEXDc"/>
    <property type="match status" value="1"/>
</dbReference>
<dbReference type="SMART" id="SM00847">
    <property type="entry name" value="HA2"/>
    <property type="match status" value="1"/>
</dbReference>
<dbReference type="SMART" id="SM00490">
    <property type="entry name" value="HELICc"/>
    <property type="match status" value="1"/>
</dbReference>
<dbReference type="SUPFAM" id="SSF52540">
    <property type="entry name" value="P-loop containing nucleoside triphosphate hydrolases"/>
    <property type="match status" value="1"/>
</dbReference>
<dbReference type="PROSITE" id="PS51192">
    <property type="entry name" value="HELICASE_ATP_BIND_1"/>
    <property type="match status" value="1"/>
</dbReference>
<dbReference type="PROSITE" id="PS51194">
    <property type="entry name" value="HELICASE_CTER"/>
    <property type="match status" value="1"/>
</dbReference>
<proteinExistence type="evidence at protein level"/>
<organism>
    <name type="scientific">Caenorhabditis elegans</name>
    <dbReference type="NCBI Taxonomy" id="6239"/>
    <lineage>
        <taxon>Eukaryota</taxon>
        <taxon>Metazoa</taxon>
        <taxon>Ecdysozoa</taxon>
        <taxon>Nematoda</taxon>
        <taxon>Chromadorea</taxon>
        <taxon>Rhabditida</taxon>
        <taxon>Rhabditina</taxon>
        <taxon>Rhabditomorpha</taxon>
        <taxon>Rhabditoidea</taxon>
        <taxon>Rhabditidae</taxon>
        <taxon>Peloderinae</taxon>
        <taxon>Caenorhabditis</taxon>
    </lineage>
</organism>
<sequence>MSSRHRLDLDGSGRGDRRRSPNRRSRSRSRSPHRRSSPDRKRQIGAVGNMKIQINPYNNQPFSNRYWAIWEKRSQLPVWEYKEKFMELLRNNQCITLVGETGSGKTTQIPQWAVEFMKQQQQGQPPGQARLVACTQPRRVAAMSVATRVAEEMDVVLGQEVGYSIRFEDCISERTVLKYCTDGMLLREAMNSPLLDKYKVLILDEAHERTLATDILMGLIKEIVRNRADIKVVIMSATLDAGKFQRYFEDCPLLSVPGRTFPVEIFFTPNAEKDYLEAAIRTVIQIHMVEEVEGDILLFLTGQEEIEEACKRIDREIQALGADAGALSCIPLYSTLPPAAQQRIFEPAPPNRPNGAISRKCVISTNIAETSLTIDGVVFVIDPGFSKQKVYNPRIRVESLLVCPISKASAMQRAGRAGRTKPGKCFRLYTETAYGSEMQDQTYPEILRSNLGSVVLQLKKLGTEDLVHFDFMDPPAPETLMRALELLNYLQAINDDGELTELGSLMAEFPLDPQLAKMLITSTELNCSNEILSITAMLSVPQCWVRPNEMRTEADEAKARFAHIDGDHLTLLNVYHSFKQNQEDPQWCYDNFINYRTMKTADTVRTQLSRVMDKYNLRRVSTDFKSRDYYLNIRKALVAGFFMQVAHLERSGHYVTVKDNQLVNLHPSTVLDHKPEWALYNEFVLTTKNFIRTVTDVRPEWLLQIAPQYYDLDNFPDGDTKRKLTTVMQTLQRNAGRGY</sequence>
<accession>Q20875</accession>